<sequence>MEEYRSKKRFGQNFLQDSHFLHKIIQSIPDIPIQCIEIGVGLGDLTQELLKIESLIAYEVDLDLCSLLNKKFSNQIQSGRLNIIYKDILNLPSQQAWLHTHEYKVVSNLPYYIATHIILRLLRDRFCRAFLVMTQKEVAQKFCATTGQKEFCALSVLVESFGKAKMLFEVPKEAFSPMPKVTSSVFVIHKYSQQNQIEDSFLCDLESFLKIAFYAPRKTLFKNLSQVFDKKLLEEVFENENIKSNARAHEVKTKSFHHILQFLKKRNDNGKQTLTRTTKQRPS</sequence>
<proteinExistence type="inferred from homology"/>
<protein>
    <recommendedName>
        <fullName evidence="1">Ribosomal RNA small subunit methyltransferase A</fullName>
        <ecNumber evidence="1">2.1.1.182</ecNumber>
    </recommendedName>
    <alternativeName>
        <fullName evidence="1">16S rRNA (adenine(1518)-N(6)/adenine(1519)-N(6))-dimethyltransferase</fullName>
    </alternativeName>
    <alternativeName>
        <fullName evidence="1">16S rRNA dimethyladenosine transferase</fullName>
    </alternativeName>
    <alternativeName>
        <fullName evidence="1">16S rRNA dimethylase</fullName>
    </alternativeName>
    <alternativeName>
        <fullName evidence="1">S-adenosylmethionine-6-N', N'-adenosyl(rRNA) dimethyltransferase</fullName>
    </alternativeName>
</protein>
<evidence type="ECO:0000255" key="1">
    <source>
        <dbReference type="HAMAP-Rule" id="MF_00607"/>
    </source>
</evidence>
<keyword id="KW-0963">Cytoplasm</keyword>
<keyword id="KW-0489">Methyltransferase</keyword>
<keyword id="KW-1185">Reference proteome</keyword>
<keyword id="KW-0694">RNA-binding</keyword>
<keyword id="KW-0698">rRNA processing</keyword>
<keyword id="KW-0949">S-adenosyl-L-methionine</keyword>
<keyword id="KW-0808">Transferase</keyword>
<gene>
    <name evidence="1" type="primary">rsmA</name>
    <name evidence="1" type="synonym">ksgA</name>
    <name type="ordered locus">HH_1174</name>
</gene>
<organism>
    <name type="scientific">Helicobacter hepaticus (strain ATCC 51449 / 3B1)</name>
    <dbReference type="NCBI Taxonomy" id="235279"/>
    <lineage>
        <taxon>Bacteria</taxon>
        <taxon>Pseudomonadati</taxon>
        <taxon>Campylobacterota</taxon>
        <taxon>Epsilonproteobacteria</taxon>
        <taxon>Campylobacterales</taxon>
        <taxon>Helicobacteraceae</taxon>
        <taxon>Helicobacter</taxon>
    </lineage>
</organism>
<dbReference type="EC" id="2.1.1.182" evidence="1"/>
<dbReference type="EMBL" id="AE017125">
    <property type="protein sequence ID" value="AAP77771.1"/>
    <property type="molecule type" value="Genomic_DNA"/>
</dbReference>
<dbReference type="RefSeq" id="WP_011116014.1">
    <property type="nucleotide sequence ID" value="NC_004917.1"/>
</dbReference>
<dbReference type="SMR" id="Q7VGZ3"/>
<dbReference type="STRING" id="235279.HH_1174"/>
<dbReference type="KEGG" id="hhe:HH_1174"/>
<dbReference type="eggNOG" id="COG0030">
    <property type="taxonomic scope" value="Bacteria"/>
</dbReference>
<dbReference type="HOGENOM" id="CLU_041220_0_2_7"/>
<dbReference type="OrthoDB" id="9814755at2"/>
<dbReference type="Proteomes" id="UP000002495">
    <property type="component" value="Chromosome"/>
</dbReference>
<dbReference type="GO" id="GO:0005829">
    <property type="term" value="C:cytosol"/>
    <property type="evidence" value="ECO:0007669"/>
    <property type="project" value="TreeGrafter"/>
</dbReference>
<dbReference type="GO" id="GO:0052908">
    <property type="term" value="F:16S rRNA (adenine(1518)-N(6)/adenine(1519)-N(6))-dimethyltransferase activity"/>
    <property type="evidence" value="ECO:0007669"/>
    <property type="project" value="UniProtKB-EC"/>
</dbReference>
<dbReference type="GO" id="GO:0003723">
    <property type="term" value="F:RNA binding"/>
    <property type="evidence" value="ECO:0007669"/>
    <property type="project" value="UniProtKB-KW"/>
</dbReference>
<dbReference type="Gene3D" id="1.10.8.100">
    <property type="entry name" value="Ribosomal RNA adenine dimethylase-like, domain 2"/>
    <property type="match status" value="1"/>
</dbReference>
<dbReference type="Gene3D" id="3.40.50.150">
    <property type="entry name" value="Vaccinia Virus protein VP39"/>
    <property type="match status" value="1"/>
</dbReference>
<dbReference type="HAMAP" id="MF_00607">
    <property type="entry name" value="16SrRNA_methyltr_A"/>
    <property type="match status" value="1"/>
</dbReference>
<dbReference type="InterPro" id="IPR001737">
    <property type="entry name" value="KsgA/Erm"/>
</dbReference>
<dbReference type="InterPro" id="IPR023165">
    <property type="entry name" value="rRNA_Ade_diMease-like_C"/>
</dbReference>
<dbReference type="InterPro" id="IPR020596">
    <property type="entry name" value="rRNA_Ade_Mease_Trfase_CS"/>
</dbReference>
<dbReference type="InterPro" id="IPR020598">
    <property type="entry name" value="rRNA_Ade_methylase_Trfase_N"/>
</dbReference>
<dbReference type="InterPro" id="IPR011530">
    <property type="entry name" value="rRNA_adenine_dimethylase"/>
</dbReference>
<dbReference type="InterPro" id="IPR029063">
    <property type="entry name" value="SAM-dependent_MTases_sf"/>
</dbReference>
<dbReference type="NCBIfam" id="TIGR00755">
    <property type="entry name" value="ksgA"/>
    <property type="match status" value="1"/>
</dbReference>
<dbReference type="PANTHER" id="PTHR11727">
    <property type="entry name" value="DIMETHYLADENOSINE TRANSFERASE"/>
    <property type="match status" value="1"/>
</dbReference>
<dbReference type="PANTHER" id="PTHR11727:SF7">
    <property type="entry name" value="DIMETHYLADENOSINE TRANSFERASE-RELATED"/>
    <property type="match status" value="1"/>
</dbReference>
<dbReference type="Pfam" id="PF00398">
    <property type="entry name" value="RrnaAD"/>
    <property type="match status" value="1"/>
</dbReference>
<dbReference type="SMART" id="SM00650">
    <property type="entry name" value="rADc"/>
    <property type="match status" value="1"/>
</dbReference>
<dbReference type="SUPFAM" id="SSF53335">
    <property type="entry name" value="S-adenosyl-L-methionine-dependent methyltransferases"/>
    <property type="match status" value="1"/>
</dbReference>
<dbReference type="PROSITE" id="PS01131">
    <property type="entry name" value="RRNA_A_DIMETH"/>
    <property type="match status" value="1"/>
</dbReference>
<dbReference type="PROSITE" id="PS51689">
    <property type="entry name" value="SAM_RNA_A_N6_MT"/>
    <property type="match status" value="1"/>
</dbReference>
<accession>Q7VGZ3</accession>
<reference key="1">
    <citation type="journal article" date="2003" name="Proc. Natl. Acad. Sci. U.S.A.">
        <title>The complete genome sequence of the carcinogenic bacterium Helicobacter hepaticus.</title>
        <authorList>
            <person name="Suerbaum S."/>
            <person name="Josenhans C."/>
            <person name="Sterzenbach T."/>
            <person name="Drescher B."/>
            <person name="Brandt P."/>
            <person name="Bell M."/>
            <person name="Droege M."/>
            <person name="Fartmann B."/>
            <person name="Fischer H.-P."/>
            <person name="Ge Z."/>
            <person name="Hoerster A."/>
            <person name="Holland R."/>
            <person name="Klein K."/>
            <person name="Koenig J."/>
            <person name="Macko L."/>
            <person name="Mendz G.L."/>
            <person name="Nyakatura G."/>
            <person name="Schauer D.B."/>
            <person name="Shen Z."/>
            <person name="Weber J."/>
            <person name="Frosch M."/>
            <person name="Fox J.G."/>
        </authorList>
    </citation>
    <scope>NUCLEOTIDE SEQUENCE [LARGE SCALE GENOMIC DNA]</scope>
    <source>
        <strain>ATCC 51449 / 3B1</strain>
    </source>
</reference>
<feature type="chain" id="PRO_0000101539" description="Ribosomal RNA small subunit methyltransferase A">
    <location>
        <begin position="1"/>
        <end position="283"/>
    </location>
</feature>
<feature type="binding site" evidence="1">
    <location>
        <position position="13"/>
    </location>
    <ligand>
        <name>S-adenosyl-L-methionine</name>
        <dbReference type="ChEBI" id="CHEBI:59789"/>
    </ligand>
</feature>
<feature type="binding site" evidence="1">
    <location>
        <position position="15"/>
    </location>
    <ligand>
        <name>S-adenosyl-L-methionine</name>
        <dbReference type="ChEBI" id="CHEBI:59789"/>
    </ligand>
</feature>
<feature type="binding site" evidence="1">
    <location>
        <position position="39"/>
    </location>
    <ligand>
        <name>S-adenosyl-L-methionine</name>
        <dbReference type="ChEBI" id="CHEBI:59789"/>
    </ligand>
</feature>
<feature type="binding site" evidence="1">
    <location>
        <position position="59"/>
    </location>
    <ligand>
        <name>S-adenosyl-L-methionine</name>
        <dbReference type="ChEBI" id="CHEBI:59789"/>
    </ligand>
</feature>
<feature type="binding site" evidence="1">
    <location>
        <position position="87"/>
    </location>
    <ligand>
        <name>S-adenosyl-L-methionine</name>
        <dbReference type="ChEBI" id="CHEBI:59789"/>
    </ligand>
</feature>
<feature type="binding site" evidence="1">
    <location>
        <position position="108"/>
    </location>
    <ligand>
        <name>S-adenosyl-L-methionine</name>
        <dbReference type="ChEBI" id="CHEBI:59789"/>
    </ligand>
</feature>
<comment type="function">
    <text evidence="1">Specifically dimethylates two adjacent adenosines (A1518 and A1519) in the loop of a conserved hairpin near the 3'-end of 16S rRNA in the 30S particle. May play a critical role in biogenesis of 30S subunits.</text>
</comment>
<comment type="catalytic activity">
    <reaction evidence="1">
        <text>adenosine(1518)/adenosine(1519) in 16S rRNA + 4 S-adenosyl-L-methionine = N(6)-dimethyladenosine(1518)/N(6)-dimethyladenosine(1519) in 16S rRNA + 4 S-adenosyl-L-homocysteine + 4 H(+)</text>
        <dbReference type="Rhea" id="RHEA:19609"/>
        <dbReference type="Rhea" id="RHEA-COMP:10232"/>
        <dbReference type="Rhea" id="RHEA-COMP:10233"/>
        <dbReference type="ChEBI" id="CHEBI:15378"/>
        <dbReference type="ChEBI" id="CHEBI:57856"/>
        <dbReference type="ChEBI" id="CHEBI:59789"/>
        <dbReference type="ChEBI" id="CHEBI:74411"/>
        <dbReference type="ChEBI" id="CHEBI:74493"/>
        <dbReference type="EC" id="2.1.1.182"/>
    </reaction>
</comment>
<comment type="subcellular location">
    <subcellularLocation>
        <location evidence="1">Cytoplasm</location>
    </subcellularLocation>
</comment>
<comment type="similarity">
    <text evidence="1">Belongs to the class I-like SAM-binding methyltransferase superfamily. rRNA adenine N(6)-methyltransferase family. RsmA subfamily.</text>
</comment>
<name>RSMA_HELHP</name>